<proteinExistence type="inferred from homology"/>
<reference key="1">
    <citation type="journal article" date="2005" name="J. Bacteriol.">
        <title>Completion of the genome sequence of Brucella abortus and comparison to the highly similar genomes of Brucella melitensis and Brucella suis.</title>
        <authorList>
            <person name="Halling S.M."/>
            <person name="Peterson-Burch B.D."/>
            <person name="Bricker B.J."/>
            <person name="Zuerner R.L."/>
            <person name="Qing Z."/>
            <person name="Li L.-L."/>
            <person name="Kapur V."/>
            <person name="Alt D.P."/>
            <person name="Olsen S.C."/>
        </authorList>
    </citation>
    <scope>NUCLEOTIDE SEQUENCE [LARGE SCALE GENOMIC DNA]</scope>
    <source>
        <strain>9-941</strain>
    </source>
</reference>
<protein>
    <recommendedName>
        <fullName evidence="1">Enolase</fullName>
        <ecNumber evidence="1">4.2.1.11</ecNumber>
    </recommendedName>
    <alternativeName>
        <fullName evidence="1">2-phospho-D-glycerate hydro-lyase</fullName>
    </alternativeName>
    <alternativeName>
        <fullName evidence="1">2-phosphoglycerate dehydratase</fullName>
    </alternativeName>
</protein>
<keyword id="KW-0963">Cytoplasm</keyword>
<keyword id="KW-0324">Glycolysis</keyword>
<keyword id="KW-0456">Lyase</keyword>
<keyword id="KW-0460">Magnesium</keyword>
<keyword id="KW-0479">Metal-binding</keyword>
<keyword id="KW-0964">Secreted</keyword>
<accession>Q57D07</accession>
<sequence>MTAIIDIVGREILDSRGNPTVEVDVVLEDGSFGRAAVPSGASTGAHEAVELRDGGSRYLGKGVEKAVEVVNGKIFDAIAGMDAESQLLIDQTLIDLDGSANKGNLGANAILGVSLAVAKAAAQASGLPLYRYVGGTNAHVLPVPMMNIINGGAHADNPIDFQEFMILPVGATSIREAVRYGSEVFHTLKKRLKDAGHNTNVGDEGGFAPNLKNAQAALDFIMESIEKAGFKPGEDIALGLDCAATEFFKDGNYVYEGERKTRDPKAQAKYLAKLASDYPIVTIEDGMAEDDWEGWKYLTDLIGNKCQLVGDDLFVTNSARLRDGIRLGVANSILVKVNQIGSLSETLDAVETAHKAGYTAVMSHRSGETEDSTIADLAVATNCGQIKTGSLARSDRTAKYNQLIRIEEELGKQARYAGRSALKLL</sequence>
<gene>
    <name evidence="1" type="primary">eno</name>
    <name type="ordered locus">BruAb1_1138</name>
</gene>
<organism>
    <name type="scientific">Brucella abortus biovar 1 (strain 9-941)</name>
    <dbReference type="NCBI Taxonomy" id="262698"/>
    <lineage>
        <taxon>Bacteria</taxon>
        <taxon>Pseudomonadati</taxon>
        <taxon>Pseudomonadota</taxon>
        <taxon>Alphaproteobacteria</taxon>
        <taxon>Hyphomicrobiales</taxon>
        <taxon>Brucellaceae</taxon>
        <taxon>Brucella/Ochrobactrum group</taxon>
        <taxon>Brucella</taxon>
    </lineage>
</organism>
<feature type="chain" id="PRO_0000267005" description="Enolase">
    <location>
        <begin position="1"/>
        <end position="425"/>
    </location>
</feature>
<feature type="active site" description="Proton donor" evidence="1">
    <location>
        <position position="204"/>
    </location>
</feature>
<feature type="active site" description="Proton acceptor" evidence="1">
    <location>
        <position position="336"/>
    </location>
</feature>
<feature type="binding site" evidence="1">
    <location>
        <position position="162"/>
    </location>
    <ligand>
        <name>(2R)-2-phosphoglycerate</name>
        <dbReference type="ChEBI" id="CHEBI:58289"/>
    </ligand>
</feature>
<feature type="binding site" evidence="1">
    <location>
        <position position="241"/>
    </location>
    <ligand>
        <name>Mg(2+)</name>
        <dbReference type="ChEBI" id="CHEBI:18420"/>
    </ligand>
</feature>
<feature type="binding site" evidence="1">
    <location>
        <position position="284"/>
    </location>
    <ligand>
        <name>Mg(2+)</name>
        <dbReference type="ChEBI" id="CHEBI:18420"/>
    </ligand>
</feature>
<feature type="binding site" evidence="1">
    <location>
        <position position="311"/>
    </location>
    <ligand>
        <name>Mg(2+)</name>
        <dbReference type="ChEBI" id="CHEBI:18420"/>
    </ligand>
</feature>
<feature type="binding site" evidence="1">
    <location>
        <position position="336"/>
    </location>
    <ligand>
        <name>(2R)-2-phosphoglycerate</name>
        <dbReference type="ChEBI" id="CHEBI:58289"/>
    </ligand>
</feature>
<feature type="binding site" evidence="1">
    <location>
        <position position="365"/>
    </location>
    <ligand>
        <name>(2R)-2-phosphoglycerate</name>
        <dbReference type="ChEBI" id="CHEBI:58289"/>
    </ligand>
</feature>
<feature type="binding site" evidence="1">
    <location>
        <position position="366"/>
    </location>
    <ligand>
        <name>(2R)-2-phosphoglycerate</name>
        <dbReference type="ChEBI" id="CHEBI:58289"/>
    </ligand>
</feature>
<feature type="binding site" evidence="1">
    <location>
        <position position="387"/>
    </location>
    <ligand>
        <name>(2R)-2-phosphoglycerate</name>
        <dbReference type="ChEBI" id="CHEBI:58289"/>
    </ligand>
</feature>
<evidence type="ECO:0000255" key="1">
    <source>
        <dbReference type="HAMAP-Rule" id="MF_00318"/>
    </source>
</evidence>
<dbReference type="EC" id="4.2.1.11" evidence="1"/>
<dbReference type="EMBL" id="AE017223">
    <property type="protein sequence ID" value="AAX74477.1"/>
    <property type="molecule type" value="Genomic_DNA"/>
</dbReference>
<dbReference type="RefSeq" id="WP_002964261.1">
    <property type="nucleotide sequence ID" value="NC_006932.1"/>
</dbReference>
<dbReference type="SMR" id="Q57D07"/>
<dbReference type="EnsemblBacteria" id="AAX74477">
    <property type="protein sequence ID" value="AAX74477"/>
    <property type="gene ID" value="BruAb1_1138"/>
</dbReference>
<dbReference type="GeneID" id="97533615"/>
<dbReference type="KEGG" id="bmb:BruAb1_1138"/>
<dbReference type="HOGENOM" id="CLU_031223_2_1_5"/>
<dbReference type="UniPathway" id="UPA00109">
    <property type="reaction ID" value="UER00187"/>
</dbReference>
<dbReference type="Proteomes" id="UP000000540">
    <property type="component" value="Chromosome I"/>
</dbReference>
<dbReference type="GO" id="GO:0009986">
    <property type="term" value="C:cell surface"/>
    <property type="evidence" value="ECO:0007669"/>
    <property type="project" value="UniProtKB-SubCell"/>
</dbReference>
<dbReference type="GO" id="GO:0005576">
    <property type="term" value="C:extracellular region"/>
    <property type="evidence" value="ECO:0007669"/>
    <property type="project" value="UniProtKB-SubCell"/>
</dbReference>
<dbReference type="GO" id="GO:0000015">
    <property type="term" value="C:phosphopyruvate hydratase complex"/>
    <property type="evidence" value="ECO:0007669"/>
    <property type="project" value="InterPro"/>
</dbReference>
<dbReference type="GO" id="GO:0000287">
    <property type="term" value="F:magnesium ion binding"/>
    <property type="evidence" value="ECO:0007669"/>
    <property type="project" value="UniProtKB-UniRule"/>
</dbReference>
<dbReference type="GO" id="GO:0004634">
    <property type="term" value="F:phosphopyruvate hydratase activity"/>
    <property type="evidence" value="ECO:0007669"/>
    <property type="project" value="UniProtKB-UniRule"/>
</dbReference>
<dbReference type="GO" id="GO:0006096">
    <property type="term" value="P:glycolytic process"/>
    <property type="evidence" value="ECO:0007669"/>
    <property type="project" value="UniProtKB-UniRule"/>
</dbReference>
<dbReference type="CDD" id="cd03313">
    <property type="entry name" value="enolase"/>
    <property type="match status" value="1"/>
</dbReference>
<dbReference type="FunFam" id="3.20.20.120:FF:000001">
    <property type="entry name" value="Enolase"/>
    <property type="match status" value="1"/>
</dbReference>
<dbReference type="FunFam" id="3.30.390.10:FF:000001">
    <property type="entry name" value="Enolase"/>
    <property type="match status" value="1"/>
</dbReference>
<dbReference type="Gene3D" id="3.20.20.120">
    <property type="entry name" value="Enolase-like C-terminal domain"/>
    <property type="match status" value="1"/>
</dbReference>
<dbReference type="Gene3D" id="3.30.390.10">
    <property type="entry name" value="Enolase-like, N-terminal domain"/>
    <property type="match status" value="1"/>
</dbReference>
<dbReference type="HAMAP" id="MF_00318">
    <property type="entry name" value="Enolase"/>
    <property type="match status" value="1"/>
</dbReference>
<dbReference type="InterPro" id="IPR000941">
    <property type="entry name" value="Enolase"/>
</dbReference>
<dbReference type="InterPro" id="IPR036849">
    <property type="entry name" value="Enolase-like_C_sf"/>
</dbReference>
<dbReference type="InterPro" id="IPR029017">
    <property type="entry name" value="Enolase-like_N"/>
</dbReference>
<dbReference type="InterPro" id="IPR020810">
    <property type="entry name" value="Enolase_C"/>
</dbReference>
<dbReference type="InterPro" id="IPR020809">
    <property type="entry name" value="Enolase_CS"/>
</dbReference>
<dbReference type="InterPro" id="IPR020811">
    <property type="entry name" value="Enolase_N"/>
</dbReference>
<dbReference type="NCBIfam" id="TIGR01060">
    <property type="entry name" value="eno"/>
    <property type="match status" value="1"/>
</dbReference>
<dbReference type="PANTHER" id="PTHR11902">
    <property type="entry name" value="ENOLASE"/>
    <property type="match status" value="1"/>
</dbReference>
<dbReference type="PANTHER" id="PTHR11902:SF1">
    <property type="entry name" value="ENOLASE"/>
    <property type="match status" value="1"/>
</dbReference>
<dbReference type="Pfam" id="PF00113">
    <property type="entry name" value="Enolase_C"/>
    <property type="match status" value="1"/>
</dbReference>
<dbReference type="Pfam" id="PF03952">
    <property type="entry name" value="Enolase_N"/>
    <property type="match status" value="1"/>
</dbReference>
<dbReference type="PIRSF" id="PIRSF001400">
    <property type="entry name" value="Enolase"/>
    <property type="match status" value="1"/>
</dbReference>
<dbReference type="PRINTS" id="PR00148">
    <property type="entry name" value="ENOLASE"/>
</dbReference>
<dbReference type="SFLD" id="SFLDF00002">
    <property type="entry name" value="enolase"/>
    <property type="match status" value="1"/>
</dbReference>
<dbReference type="SFLD" id="SFLDG00178">
    <property type="entry name" value="enolase"/>
    <property type="match status" value="1"/>
</dbReference>
<dbReference type="SMART" id="SM01192">
    <property type="entry name" value="Enolase_C"/>
    <property type="match status" value="1"/>
</dbReference>
<dbReference type="SMART" id="SM01193">
    <property type="entry name" value="Enolase_N"/>
    <property type="match status" value="1"/>
</dbReference>
<dbReference type="SUPFAM" id="SSF51604">
    <property type="entry name" value="Enolase C-terminal domain-like"/>
    <property type="match status" value="1"/>
</dbReference>
<dbReference type="SUPFAM" id="SSF54826">
    <property type="entry name" value="Enolase N-terminal domain-like"/>
    <property type="match status" value="1"/>
</dbReference>
<dbReference type="PROSITE" id="PS00164">
    <property type="entry name" value="ENOLASE"/>
    <property type="match status" value="1"/>
</dbReference>
<name>ENO_BRUAB</name>
<comment type="function">
    <text evidence="1">Catalyzes the reversible conversion of 2-phosphoglycerate (2-PG) into phosphoenolpyruvate (PEP). It is essential for the degradation of carbohydrates via glycolysis.</text>
</comment>
<comment type="catalytic activity">
    <reaction evidence="1">
        <text>(2R)-2-phosphoglycerate = phosphoenolpyruvate + H2O</text>
        <dbReference type="Rhea" id="RHEA:10164"/>
        <dbReference type="ChEBI" id="CHEBI:15377"/>
        <dbReference type="ChEBI" id="CHEBI:58289"/>
        <dbReference type="ChEBI" id="CHEBI:58702"/>
        <dbReference type="EC" id="4.2.1.11"/>
    </reaction>
</comment>
<comment type="cofactor">
    <cofactor evidence="1">
        <name>Mg(2+)</name>
        <dbReference type="ChEBI" id="CHEBI:18420"/>
    </cofactor>
    <text evidence="1">Binds a second Mg(2+) ion via substrate during catalysis.</text>
</comment>
<comment type="pathway">
    <text evidence="1">Carbohydrate degradation; glycolysis; pyruvate from D-glyceraldehyde 3-phosphate: step 4/5.</text>
</comment>
<comment type="subcellular location">
    <subcellularLocation>
        <location evidence="1">Cytoplasm</location>
    </subcellularLocation>
    <subcellularLocation>
        <location evidence="1">Secreted</location>
    </subcellularLocation>
    <subcellularLocation>
        <location evidence="1">Cell surface</location>
    </subcellularLocation>
    <text evidence="1">Fractions of enolase are present in both the cytoplasm and on the cell surface.</text>
</comment>
<comment type="similarity">
    <text evidence="1">Belongs to the enolase family.</text>
</comment>